<organism>
    <name type="scientific">Emericella nidulans (strain FGSC A4 / ATCC 38163 / CBS 112.46 / NRRL 194 / M139)</name>
    <name type="common">Aspergillus nidulans</name>
    <dbReference type="NCBI Taxonomy" id="227321"/>
    <lineage>
        <taxon>Eukaryota</taxon>
        <taxon>Fungi</taxon>
        <taxon>Dikarya</taxon>
        <taxon>Ascomycota</taxon>
        <taxon>Pezizomycotina</taxon>
        <taxon>Eurotiomycetes</taxon>
        <taxon>Eurotiomycetidae</taxon>
        <taxon>Eurotiales</taxon>
        <taxon>Aspergillaceae</taxon>
        <taxon>Aspergillus</taxon>
        <taxon>Aspergillus subgen. Nidulantes</taxon>
    </lineage>
</organism>
<name>RHA1_EMENI</name>
<protein>
    <recommendedName>
        <fullName evidence="5">Rhamnogalacturonan acetylesterase</fullName>
        <shortName>RGAE</shortName>
        <ecNumber evidence="3">3.1.1.86</ecNumber>
    </recommendedName>
</protein>
<feature type="signal peptide" evidence="2">
    <location>
        <begin position="1"/>
        <end position="17"/>
    </location>
</feature>
<feature type="chain" id="PRO_0000432721" description="Rhamnogalacturonan acetylesterase">
    <location>
        <begin position="18"/>
        <end position="245"/>
    </location>
</feature>
<feature type="active site" description="Nucleophile" evidence="1">
    <location>
        <position position="26"/>
    </location>
</feature>
<feature type="active site" evidence="1">
    <location>
        <position position="204"/>
    </location>
</feature>
<feature type="active site" evidence="1">
    <location>
        <position position="207"/>
    </location>
</feature>
<feature type="disulfide bond" evidence="1">
    <location>
        <begin position="100"/>
        <end position="108"/>
    </location>
</feature>
<feature type="disulfide bond" evidence="1">
    <location>
        <begin position="226"/>
        <end position="244"/>
    </location>
</feature>
<gene>
    <name type="ORF">AN2528</name>
</gene>
<dbReference type="EC" id="3.1.1.86" evidence="3"/>
<dbReference type="EMBL" id="BN001307">
    <property type="protein sequence ID" value="CBF87034.1"/>
    <property type="molecule type" value="Genomic_DNA"/>
</dbReference>
<dbReference type="EMBL" id="AACD01000043">
    <property type="protein sequence ID" value="EAA64633.1"/>
    <property type="molecule type" value="Genomic_DNA"/>
</dbReference>
<dbReference type="RefSeq" id="XP_660132.1">
    <property type="nucleotide sequence ID" value="XM_655040.1"/>
</dbReference>
<dbReference type="SMR" id="Q5BAA2"/>
<dbReference type="STRING" id="227321.Q5BAA2"/>
<dbReference type="EnsemblFungi" id="CBF87034">
    <property type="protein sequence ID" value="CBF87034"/>
    <property type="gene ID" value="ANIA_02528"/>
</dbReference>
<dbReference type="KEGG" id="ani:ANIA_02528"/>
<dbReference type="VEuPathDB" id="FungiDB:AN2528"/>
<dbReference type="eggNOG" id="ENOG502RY37">
    <property type="taxonomic scope" value="Eukaryota"/>
</dbReference>
<dbReference type="HOGENOM" id="CLU_065859_0_0_1"/>
<dbReference type="InParanoid" id="Q5BAA2"/>
<dbReference type="OMA" id="QMGHNDA"/>
<dbReference type="OrthoDB" id="2141316at2759"/>
<dbReference type="Proteomes" id="UP000000560">
    <property type="component" value="Chromosome VII"/>
</dbReference>
<dbReference type="GO" id="GO:0005576">
    <property type="term" value="C:extracellular region"/>
    <property type="evidence" value="ECO:0007669"/>
    <property type="project" value="UniProtKB-SubCell"/>
</dbReference>
<dbReference type="GO" id="GO:0046575">
    <property type="term" value="F:rhamnogalacturonan acetylesterase activity"/>
    <property type="evidence" value="ECO:0000314"/>
    <property type="project" value="UniProtKB"/>
</dbReference>
<dbReference type="GO" id="GO:0045490">
    <property type="term" value="P:pectin catabolic process"/>
    <property type="evidence" value="ECO:0000314"/>
    <property type="project" value="UniProtKB"/>
</dbReference>
<dbReference type="FunFam" id="3.40.50.1110:FF:000010">
    <property type="entry name" value="Putative rhamnogalacturonan acetylesterase"/>
    <property type="match status" value="1"/>
</dbReference>
<dbReference type="Gene3D" id="3.40.50.1110">
    <property type="entry name" value="SGNH hydrolase"/>
    <property type="match status" value="1"/>
</dbReference>
<dbReference type="InterPro" id="IPR001087">
    <property type="entry name" value="GDSL"/>
</dbReference>
<dbReference type="InterPro" id="IPR037459">
    <property type="entry name" value="RhgT-like"/>
</dbReference>
<dbReference type="InterPro" id="IPR036514">
    <property type="entry name" value="SGNH_hydro_sf"/>
</dbReference>
<dbReference type="PANTHER" id="PTHR43695">
    <property type="entry name" value="PUTATIVE (AFU_ORTHOLOGUE AFUA_2G17250)-RELATED"/>
    <property type="match status" value="1"/>
</dbReference>
<dbReference type="PANTHER" id="PTHR43695:SF1">
    <property type="entry name" value="RHAMNOGALACTURONAN ACETYLESTERASE"/>
    <property type="match status" value="1"/>
</dbReference>
<dbReference type="Pfam" id="PF00657">
    <property type="entry name" value="Lipase_GDSL"/>
    <property type="match status" value="1"/>
</dbReference>
<dbReference type="SUPFAM" id="SSF52266">
    <property type="entry name" value="SGNH hydrolase"/>
    <property type="match status" value="1"/>
</dbReference>
<sequence>MKSIALTSLSLLPSALAQTIYLAGDSTMASSTPGWGDYIADSVSVEISNQAIGGRSARSYTREGRFQAIADVLQAGDYVVIEFGHNDGGSLSNDNGRTDCPGDGDETCETVYNGVAETVLTFPAYIENAALLFLEKGANVLISSQTPNNPWESGTFSYTPNRFVGYAELAAQRAGVDYVDHGAYTASIFEALGADTVNSFYPNDHTHTNAEGSSVVADAFLKAVVCSGVALNDVLTRTDFDGECL</sequence>
<keyword id="KW-1015">Disulfide bond</keyword>
<keyword id="KW-0378">Hydrolase</keyword>
<keyword id="KW-1185">Reference proteome</keyword>
<keyword id="KW-0964">Secreted</keyword>
<keyword id="KW-0732">Signal</keyword>
<reference key="1">
    <citation type="journal article" date="2005" name="Nature">
        <title>Sequencing of Aspergillus nidulans and comparative analysis with A. fumigatus and A. oryzae.</title>
        <authorList>
            <person name="Galagan J.E."/>
            <person name="Calvo S.E."/>
            <person name="Cuomo C."/>
            <person name="Ma L.-J."/>
            <person name="Wortman J.R."/>
            <person name="Batzoglou S."/>
            <person name="Lee S.-I."/>
            <person name="Bastuerkmen M."/>
            <person name="Spevak C.C."/>
            <person name="Clutterbuck J."/>
            <person name="Kapitonov V."/>
            <person name="Jurka J."/>
            <person name="Scazzocchio C."/>
            <person name="Farman M.L."/>
            <person name="Butler J."/>
            <person name="Purcell S."/>
            <person name="Harris S."/>
            <person name="Braus G.H."/>
            <person name="Draht O."/>
            <person name="Busch S."/>
            <person name="D'Enfert C."/>
            <person name="Bouchier C."/>
            <person name="Goldman G.H."/>
            <person name="Bell-Pedersen D."/>
            <person name="Griffiths-Jones S."/>
            <person name="Doonan J.H."/>
            <person name="Yu J."/>
            <person name="Vienken K."/>
            <person name="Pain A."/>
            <person name="Freitag M."/>
            <person name="Selker E.U."/>
            <person name="Archer D.B."/>
            <person name="Penalva M.A."/>
            <person name="Oakley B.R."/>
            <person name="Momany M."/>
            <person name="Tanaka T."/>
            <person name="Kumagai T."/>
            <person name="Asai K."/>
            <person name="Machida M."/>
            <person name="Nierman W.C."/>
            <person name="Denning D.W."/>
            <person name="Caddick M.X."/>
            <person name="Hynes M."/>
            <person name="Paoletti M."/>
            <person name="Fischer R."/>
            <person name="Miller B.L."/>
            <person name="Dyer P.S."/>
            <person name="Sachs M.S."/>
            <person name="Osmani S.A."/>
            <person name="Birren B.W."/>
        </authorList>
    </citation>
    <scope>NUCLEOTIDE SEQUENCE [LARGE SCALE GENOMIC DNA]</scope>
    <source>
        <strain>FGSC A4 / ATCC 38163 / CBS 112.46 / NRRL 194 / M139</strain>
    </source>
</reference>
<reference key="2">
    <citation type="journal article" date="2009" name="Fungal Genet. Biol.">
        <title>The 2008 update of the Aspergillus nidulans genome annotation: a community effort.</title>
        <authorList>
            <person name="Wortman J.R."/>
            <person name="Gilsenan J.M."/>
            <person name="Joardar V."/>
            <person name="Deegan J."/>
            <person name="Clutterbuck J."/>
            <person name="Andersen M.R."/>
            <person name="Archer D."/>
            <person name="Bencina M."/>
            <person name="Braus G."/>
            <person name="Coutinho P."/>
            <person name="von Dohren H."/>
            <person name="Doonan J."/>
            <person name="Driessen A.J."/>
            <person name="Durek P."/>
            <person name="Espeso E."/>
            <person name="Fekete E."/>
            <person name="Flipphi M."/>
            <person name="Estrada C.G."/>
            <person name="Geysens S."/>
            <person name="Goldman G."/>
            <person name="de Groot P.W."/>
            <person name="Hansen K."/>
            <person name="Harris S.D."/>
            <person name="Heinekamp T."/>
            <person name="Helmstaedt K."/>
            <person name="Henrissat B."/>
            <person name="Hofmann G."/>
            <person name="Homan T."/>
            <person name="Horio T."/>
            <person name="Horiuchi H."/>
            <person name="James S."/>
            <person name="Jones M."/>
            <person name="Karaffa L."/>
            <person name="Karanyi Z."/>
            <person name="Kato M."/>
            <person name="Keller N."/>
            <person name="Kelly D.E."/>
            <person name="Kiel J.A."/>
            <person name="Kim J.M."/>
            <person name="van der Klei I.J."/>
            <person name="Klis F.M."/>
            <person name="Kovalchuk A."/>
            <person name="Krasevec N."/>
            <person name="Kubicek C.P."/>
            <person name="Liu B."/>
            <person name="Maccabe A."/>
            <person name="Meyer V."/>
            <person name="Mirabito P."/>
            <person name="Miskei M."/>
            <person name="Mos M."/>
            <person name="Mullins J."/>
            <person name="Nelson D.R."/>
            <person name="Nielsen J."/>
            <person name="Oakley B.R."/>
            <person name="Osmani S.A."/>
            <person name="Pakula T."/>
            <person name="Paszewski A."/>
            <person name="Paulsen I."/>
            <person name="Pilsyk S."/>
            <person name="Pocsi I."/>
            <person name="Punt P.J."/>
            <person name="Ram A.F."/>
            <person name="Ren Q."/>
            <person name="Robellet X."/>
            <person name="Robson G."/>
            <person name="Seiboth B."/>
            <person name="van Solingen P."/>
            <person name="Specht T."/>
            <person name="Sun J."/>
            <person name="Taheri-Talesh N."/>
            <person name="Takeshita N."/>
            <person name="Ussery D."/>
            <person name="vanKuyk P.A."/>
            <person name="Visser H."/>
            <person name="van de Vondervoort P.J."/>
            <person name="de Vries R.P."/>
            <person name="Walton J."/>
            <person name="Xiang X."/>
            <person name="Xiong Y."/>
            <person name="Zeng A.P."/>
            <person name="Brandt B.W."/>
            <person name="Cornell M.J."/>
            <person name="van den Hondel C.A."/>
            <person name="Visser J."/>
            <person name="Oliver S.G."/>
            <person name="Turner G."/>
        </authorList>
    </citation>
    <scope>GENOME REANNOTATION</scope>
    <source>
        <strain>FGSC A4 / ATCC 38163 / CBS 112.46 / NRRL 194 / M139</strain>
    </source>
</reference>
<reference key="3">
    <citation type="journal article" date="2006" name="Proc. Natl. Acad. Sci. U.S.A.">
        <title>Development and application of a suite of polysaccharide-degrading enzymes for analyzing plant cell walls.</title>
        <authorList>
            <person name="Bauer S."/>
            <person name="Vasu P."/>
            <person name="Persson S."/>
            <person name="Mort A.J."/>
            <person name="Somerville C.R."/>
        </authorList>
    </citation>
    <scope>FUNCTION</scope>
    <scope>CATALYTIC ACTIVITY</scope>
</reference>
<reference key="4">
    <citation type="journal article" date="2012" name="Ann. Bot.">
        <title>An efficient method for transient gene expression in monocots applied to modify the Brachypodium distachyon cell wall.</title>
        <authorList>
            <person name="Fursova O."/>
            <person name="Pogorelko G."/>
            <person name="Zabotina O.A."/>
        </authorList>
    </citation>
    <scope>FUNCTION</scope>
</reference>
<accession>Q5BAA2</accession>
<accession>C8VPL0</accession>
<accession>Q1HFU5</accession>
<evidence type="ECO:0000250" key="1">
    <source>
        <dbReference type="UniProtKB" id="Q00017"/>
    </source>
</evidence>
<evidence type="ECO:0000255" key="2"/>
<evidence type="ECO:0000269" key="3">
    <source>
    </source>
</evidence>
<evidence type="ECO:0000269" key="4">
    <source>
    </source>
</evidence>
<evidence type="ECO:0000303" key="5">
    <source>
    </source>
</evidence>
<evidence type="ECO:0000305" key="6"/>
<evidence type="ECO:0000305" key="7">
    <source>
    </source>
</evidence>
<comment type="function">
    <text evidence="3 4">Plays a key role in the degradation of rhamnogalacturonan in the cell wall. Involved in degradation of pectin.</text>
</comment>
<comment type="catalytic activity">
    <reaction evidence="3">
        <text>Hydrolytic cleavage of 2-O-acetyl- or 3-O-acetyl groups of alpha-D-galacturonic acid in rhamnogalacturonan I.</text>
        <dbReference type="EC" id="3.1.1.86"/>
    </reaction>
</comment>
<comment type="subcellular location">
    <subcellularLocation>
        <location evidence="7">Secreted</location>
    </subcellularLocation>
</comment>
<comment type="similarity">
    <text evidence="6">Belongs to the 'GDSL' lipolytic enzyme family.</text>
</comment>
<proteinExistence type="evidence at protein level"/>